<evidence type="ECO:0000255" key="1">
    <source>
        <dbReference type="HAMAP-Rule" id="MF_00636"/>
    </source>
</evidence>
<evidence type="ECO:0000305" key="2"/>
<proteinExistence type="inferred from homology"/>
<accession>Q145W5</accession>
<gene>
    <name type="ordered locus">Bxeno_A0336</name>
    <name type="ORF">Bxe_A4126</name>
</gene>
<name>Y336_PARXL</name>
<keyword id="KW-0067">ATP-binding</keyword>
<keyword id="KW-0342">GTP-binding</keyword>
<keyword id="KW-0547">Nucleotide-binding</keyword>
<keyword id="KW-1185">Reference proteome</keyword>
<feature type="chain" id="PRO_0000258950" description="Nucleotide-binding protein Bxeno_A0336">
    <location>
        <begin position="1"/>
        <end position="297"/>
    </location>
</feature>
<feature type="binding site" evidence="1">
    <location>
        <begin position="8"/>
        <end position="15"/>
    </location>
    <ligand>
        <name>ATP</name>
        <dbReference type="ChEBI" id="CHEBI:30616"/>
    </ligand>
</feature>
<feature type="binding site" evidence="1">
    <location>
        <begin position="57"/>
        <end position="60"/>
    </location>
    <ligand>
        <name>GTP</name>
        <dbReference type="ChEBI" id="CHEBI:37565"/>
    </ligand>
</feature>
<protein>
    <recommendedName>
        <fullName evidence="1">Nucleotide-binding protein Bxeno_A0336</fullName>
    </recommendedName>
</protein>
<sequence>MRIILITGISGSGKSVALNALEDAGYYCVDNLPPRFLPQLASYLAEDGQDRLAVAIDARSSASLDEMPAMIRDLSRAHDVRVLFLNASTQSLIQRFSETRRRHPLSGSTSHDADVGLLNSLAEAIERERELVAGLAEFGHQIDTSNLRANVLRAWVKRFIEQKDSGLVLMFESFGFKRGVPLDADFVFDVRTLPNPYYDHELRPLTGLDKPVIDFLDALPVVHEMIDDIEKFLAKWLPHFRDDNRSYLTVAIGCTGGQHRSVFIAETLAARLAASANVIVRHRDAPVEAGESSKLVA</sequence>
<organism>
    <name type="scientific">Paraburkholderia xenovorans (strain LB400)</name>
    <dbReference type="NCBI Taxonomy" id="266265"/>
    <lineage>
        <taxon>Bacteria</taxon>
        <taxon>Pseudomonadati</taxon>
        <taxon>Pseudomonadota</taxon>
        <taxon>Betaproteobacteria</taxon>
        <taxon>Burkholderiales</taxon>
        <taxon>Burkholderiaceae</taxon>
        <taxon>Paraburkholderia</taxon>
    </lineage>
</organism>
<comment type="function">
    <text evidence="1">Displays ATPase and GTPase activities.</text>
</comment>
<comment type="similarity">
    <text evidence="1">Belongs to the RapZ-like family.</text>
</comment>
<comment type="sequence caution" evidence="2">
    <conflict type="erroneous initiation">
        <sequence resource="EMBL-CDS" id="ABE28874"/>
    </conflict>
</comment>
<dbReference type="EMBL" id="CP000270">
    <property type="protein sequence ID" value="ABE28874.1"/>
    <property type="status" value="ALT_INIT"/>
    <property type="molecule type" value="Genomic_DNA"/>
</dbReference>
<dbReference type="RefSeq" id="WP_038458391.1">
    <property type="nucleotide sequence ID" value="NC_007951.1"/>
</dbReference>
<dbReference type="SMR" id="Q145W5"/>
<dbReference type="STRING" id="266265.Bxe_A4126"/>
<dbReference type="KEGG" id="bxb:DR64_1802"/>
<dbReference type="KEGG" id="bxe:Bxe_A4126"/>
<dbReference type="PATRIC" id="fig|266265.5.peg.356"/>
<dbReference type="eggNOG" id="COG1660">
    <property type="taxonomic scope" value="Bacteria"/>
</dbReference>
<dbReference type="OrthoDB" id="9784461at2"/>
<dbReference type="Proteomes" id="UP000001817">
    <property type="component" value="Chromosome 1"/>
</dbReference>
<dbReference type="GO" id="GO:0005524">
    <property type="term" value="F:ATP binding"/>
    <property type="evidence" value="ECO:0007669"/>
    <property type="project" value="UniProtKB-UniRule"/>
</dbReference>
<dbReference type="GO" id="GO:0005525">
    <property type="term" value="F:GTP binding"/>
    <property type="evidence" value="ECO:0007669"/>
    <property type="project" value="UniProtKB-UniRule"/>
</dbReference>
<dbReference type="Gene3D" id="3.40.50.300">
    <property type="entry name" value="P-loop containing nucleotide triphosphate hydrolases"/>
    <property type="match status" value="1"/>
</dbReference>
<dbReference type="HAMAP" id="MF_00636">
    <property type="entry name" value="RapZ_like"/>
    <property type="match status" value="1"/>
</dbReference>
<dbReference type="InterPro" id="IPR027417">
    <property type="entry name" value="P-loop_NTPase"/>
</dbReference>
<dbReference type="InterPro" id="IPR005337">
    <property type="entry name" value="RapZ-like"/>
</dbReference>
<dbReference type="InterPro" id="IPR053930">
    <property type="entry name" value="RapZ-like_N"/>
</dbReference>
<dbReference type="InterPro" id="IPR053931">
    <property type="entry name" value="RapZ_C"/>
</dbReference>
<dbReference type="NCBIfam" id="NF003828">
    <property type="entry name" value="PRK05416.1"/>
    <property type="match status" value="1"/>
</dbReference>
<dbReference type="PANTHER" id="PTHR30448">
    <property type="entry name" value="RNASE ADAPTER PROTEIN RAPZ"/>
    <property type="match status" value="1"/>
</dbReference>
<dbReference type="PANTHER" id="PTHR30448:SF0">
    <property type="entry name" value="RNASE ADAPTER PROTEIN RAPZ"/>
    <property type="match status" value="1"/>
</dbReference>
<dbReference type="Pfam" id="PF22740">
    <property type="entry name" value="PapZ_C"/>
    <property type="match status" value="1"/>
</dbReference>
<dbReference type="Pfam" id="PF03668">
    <property type="entry name" value="RapZ-like_N"/>
    <property type="match status" value="1"/>
</dbReference>
<dbReference type="PIRSF" id="PIRSF005052">
    <property type="entry name" value="P-loopkin"/>
    <property type="match status" value="1"/>
</dbReference>
<dbReference type="SUPFAM" id="SSF52540">
    <property type="entry name" value="P-loop containing nucleoside triphosphate hydrolases"/>
    <property type="match status" value="1"/>
</dbReference>
<reference key="1">
    <citation type="journal article" date="2006" name="Proc. Natl. Acad. Sci. U.S.A.">
        <title>Burkholderia xenovorans LB400 harbors a multi-replicon, 9.73-Mbp genome shaped for versatility.</title>
        <authorList>
            <person name="Chain P.S.G."/>
            <person name="Denef V.J."/>
            <person name="Konstantinidis K.T."/>
            <person name="Vergez L.M."/>
            <person name="Agullo L."/>
            <person name="Reyes V.L."/>
            <person name="Hauser L."/>
            <person name="Cordova M."/>
            <person name="Gomez L."/>
            <person name="Gonzalez M."/>
            <person name="Land M."/>
            <person name="Lao V."/>
            <person name="Larimer F."/>
            <person name="LiPuma J.J."/>
            <person name="Mahenthiralingam E."/>
            <person name="Malfatti S.A."/>
            <person name="Marx C.J."/>
            <person name="Parnell J.J."/>
            <person name="Ramette A."/>
            <person name="Richardson P."/>
            <person name="Seeger M."/>
            <person name="Smith D."/>
            <person name="Spilker T."/>
            <person name="Sul W.J."/>
            <person name="Tsoi T.V."/>
            <person name="Ulrich L.E."/>
            <person name="Zhulin I.B."/>
            <person name="Tiedje J.M."/>
        </authorList>
    </citation>
    <scope>NUCLEOTIDE SEQUENCE [LARGE SCALE GENOMIC DNA]</scope>
    <source>
        <strain>LB400</strain>
    </source>
</reference>